<gene>
    <name evidence="1" type="primary">isdG</name>
    <name type="ordered locus">BH3293</name>
</gene>
<accession>Q9K7R6</accession>
<comment type="function">
    <text evidence="1">Allows bacterial pathogens to use the host heme as an iron source. Catalyzes the oxidative degradation of the heme macrocyclic porphyrin ring to the biliverdin in the presence of a suitable electron donor such as ascorbate or NADPH--cytochrome P450 reductase, with subsequent release of free iron.</text>
</comment>
<comment type="catalytic activity">
    <reaction evidence="1">
        <text>heme b + 3 reduced [NADPH--hemoprotein reductase] + 3 O2 = biliverdin IXalpha + CO + Fe(2+) + 3 oxidized [NADPH--hemoprotein reductase] + 3 H2O + H(+)</text>
        <dbReference type="Rhea" id="RHEA:21764"/>
        <dbReference type="Rhea" id="RHEA-COMP:11964"/>
        <dbReference type="Rhea" id="RHEA-COMP:11965"/>
        <dbReference type="ChEBI" id="CHEBI:15377"/>
        <dbReference type="ChEBI" id="CHEBI:15378"/>
        <dbReference type="ChEBI" id="CHEBI:15379"/>
        <dbReference type="ChEBI" id="CHEBI:17245"/>
        <dbReference type="ChEBI" id="CHEBI:29033"/>
        <dbReference type="ChEBI" id="CHEBI:57618"/>
        <dbReference type="ChEBI" id="CHEBI:57991"/>
        <dbReference type="ChEBI" id="CHEBI:58210"/>
        <dbReference type="ChEBI" id="CHEBI:60344"/>
        <dbReference type="EC" id="1.14.14.18"/>
    </reaction>
</comment>
<comment type="subunit">
    <text evidence="1">Homodimer.</text>
</comment>
<comment type="subcellular location">
    <subcellularLocation>
        <location evidence="1">Cytoplasm</location>
    </subcellularLocation>
</comment>
<comment type="similarity">
    <text evidence="1">Belongs to the antibiotic biosynthesis monooxygenase family. Heme-degrading monooxygenase IsdG subfamily.</text>
</comment>
<feature type="chain" id="PRO_0000270075" description="Heme-degrading monooxygenase">
    <location>
        <begin position="1"/>
        <end position="116"/>
    </location>
</feature>
<feature type="domain" description="ABM" evidence="1">
    <location>
        <begin position="2"/>
        <end position="92"/>
    </location>
</feature>
<feature type="binding site" evidence="1">
    <location>
        <position position="6"/>
    </location>
    <ligand>
        <name>Fe cation</name>
        <dbReference type="ChEBI" id="CHEBI:24875"/>
    </ligand>
</feature>
<feature type="binding site" description="axial binding residue" evidence="1">
    <location>
        <position position="76"/>
    </location>
    <ligand>
        <name>heme</name>
        <dbReference type="ChEBI" id="CHEBI:30413"/>
    </ligand>
    <ligandPart>
        <name>Fe</name>
        <dbReference type="ChEBI" id="CHEBI:18248"/>
    </ligandPart>
</feature>
<feature type="site" description="Transition state stabilizer" evidence="1">
    <location>
        <position position="66"/>
    </location>
</feature>
<dbReference type="EC" id="1.14.14.18" evidence="1"/>
<dbReference type="EMBL" id="BA000004">
    <property type="protein sequence ID" value="BAB07012.1"/>
    <property type="molecule type" value="Genomic_DNA"/>
</dbReference>
<dbReference type="PIR" id="E84061">
    <property type="entry name" value="E84061"/>
</dbReference>
<dbReference type="RefSeq" id="WP_010899434.1">
    <property type="nucleotide sequence ID" value="NC_002570.2"/>
</dbReference>
<dbReference type="SMR" id="Q9K7R6"/>
<dbReference type="STRING" id="272558.gene:10729205"/>
<dbReference type="GeneID" id="87598813"/>
<dbReference type="KEGG" id="bha:BH3293"/>
<dbReference type="eggNOG" id="COG2329">
    <property type="taxonomic scope" value="Bacteria"/>
</dbReference>
<dbReference type="HOGENOM" id="CLU_141544_2_1_9"/>
<dbReference type="OrthoDB" id="384737at2"/>
<dbReference type="Proteomes" id="UP000001258">
    <property type="component" value="Chromosome"/>
</dbReference>
<dbReference type="GO" id="GO:0005737">
    <property type="term" value="C:cytoplasm"/>
    <property type="evidence" value="ECO:0007669"/>
    <property type="project" value="UniProtKB-SubCell"/>
</dbReference>
<dbReference type="GO" id="GO:0020037">
    <property type="term" value="F:heme binding"/>
    <property type="evidence" value="ECO:0007669"/>
    <property type="project" value="UniProtKB-UniRule"/>
</dbReference>
<dbReference type="GO" id="GO:0004392">
    <property type="term" value="F:heme oxygenase (decyclizing) activity"/>
    <property type="evidence" value="ECO:0007669"/>
    <property type="project" value="UniProtKB-UniRule"/>
</dbReference>
<dbReference type="GO" id="GO:0005506">
    <property type="term" value="F:iron ion binding"/>
    <property type="evidence" value="ECO:0007669"/>
    <property type="project" value="UniProtKB-UniRule"/>
</dbReference>
<dbReference type="GO" id="GO:0042167">
    <property type="term" value="P:heme catabolic process"/>
    <property type="evidence" value="ECO:0007669"/>
    <property type="project" value="UniProtKB-UniRule"/>
</dbReference>
<dbReference type="GO" id="GO:0033212">
    <property type="term" value="P:iron import into cell"/>
    <property type="evidence" value="ECO:0007669"/>
    <property type="project" value="InterPro"/>
</dbReference>
<dbReference type="Gene3D" id="3.30.70.100">
    <property type="match status" value="1"/>
</dbReference>
<dbReference type="HAMAP" id="MF_01272">
    <property type="entry name" value="Heme_degrading_monooxygenase"/>
    <property type="match status" value="1"/>
</dbReference>
<dbReference type="InterPro" id="IPR007138">
    <property type="entry name" value="ABM_dom"/>
</dbReference>
<dbReference type="InterPro" id="IPR011008">
    <property type="entry name" value="Dimeric_a/b-barrel"/>
</dbReference>
<dbReference type="InterPro" id="IPR050404">
    <property type="entry name" value="Heme-degrading_MO"/>
</dbReference>
<dbReference type="InterPro" id="IPR023953">
    <property type="entry name" value="IsdG"/>
</dbReference>
<dbReference type="NCBIfam" id="NF009839">
    <property type="entry name" value="PRK13314.1"/>
    <property type="match status" value="1"/>
</dbReference>
<dbReference type="PANTHER" id="PTHR34474:SF4">
    <property type="entry name" value="HEME OXYGENASE (STAPHYLOBILIN-PRODUCING) 1"/>
    <property type="match status" value="1"/>
</dbReference>
<dbReference type="PANTHER" id="PTHR34474">
    <property type="entry name" value="SIGNAL TRANSDUCTION PROTEIN TRAP"/>
    <property type="match status" value="1"/>
</dbReference>
<dbReference type="Pfam" id="PF03992">
    <property type="entry name" value="ABM"/>
    <property type="match status" value="1"/>
</dbReference>
<dbReference type="SUPFAM" id="SSF54909">
    <property type="entry name" value="Dimeric alpha+beta barrel"/>
    <property type="match status" value="1"/>
</dbReference>
<dbReference type="PROSITE" id="PS51725">
    <property type="entry name" value="ABM"/>
    <property type="match status" value="1"/>
</dbReference>
<organism>
    <name type="scientific">Halalkalibacterium halodurans (strain ATCC BAA-125 / DSM 18197 / FERM 7344 / JCM 9153 / C-125)</name>
    <name type="common">Bacillus halodurans</name>
    <dbReference type="NCBI Taxonomy" id="272558"/>
    <lineage>
        <taxon>Bacteria</taxon>
        <taxon>Bacillati</taxon>
        <taxon>Bacillota</taxon>
        <taxon>Bacilli</taxon>
        <taxon>Bacillales</taxon>
        <taxon>Bacillaceae</taxon>
        <taxon>Halalkalibacterium (ex Joshi et al. 2022)</taxon>
    </lineage>
</organism>
<protein>
    <recommendedName>
        <fullName evidence="1">Heme-degrading monooxygenase</fullName>
        <ecNumber evidence="1">1.14.14.18</ecNumber>
    </recommendedName>
    <alternativeName>
        <fullName evidence="1">Heme oxygenase</fullName>
    </alternativeName>
    <alternativeName>
        <fullName evidence="1">Iron-regulated surface determinant</fullName>
    </alternativeName>
    <alternativeName>
        <fullName evidence="1">Iron-responsive surface determinant</fullName>
    </alternativeName>
</protein>
<reference key="1">
    <citation type="journal article" date="2000" name="Nucleic Acids Res.">
        <title>Complete genome sequence of the alkaliphilic bacterium Bacillus halodurans and genomic sequence comparison with Bacillus subtilis.</title>
        <authorList>
            <person name="Takami H."/>
            <person name="Nakasone K."/>
            <person name="Takaki Y."/>
            <person name="Maeno G."/>
            <person name="Sasaki R."/>
            <person name="Masui N."/>
            <person name="Fuji F."/>
            <person name="Hirama C."/>
            <person name="Nakamura Y."/>
            <person name="Ogasawara N."/>
            <person name="Kuhara S."/>
            <person name="Horikoshi K."/>
        </authorList>
    </citation>
    <scope>NUCLEOTIDE SEQUENCE [LARGE SCALE GENOMIC DNA]</scope>
    <source>
        <strain>ATCC BAA-125 / DSM 18197 / FERM 7344 / JCM 9153 / C-125</strain>
    </source>
</reference>
<proteinExistence type="inferred from homology"/>
<sequence length="116" mass="13175">MVIVTNTSKITKGNGEKLIERFNKVGKVEFMEGFLGLEVLLTENTKDFDEVTVVTRWNTKDDFKNWTKSSAFRDAHSKREVPEYILENKISFYEVKVVRGPLTAAEAGNDSQAQAQ</sequence>
<evidence type="ECO:0000255" key="1">
    <source>
        <dbReference type="HAMAP-Rule" id="MF_01272"/>
    </source>
</evidence>
<keyword id="KW-0963">Cytoplasm</keyword>
<keyword id="KW-0349">Heme</keyword>
<keyword id="KW-0408">Iron</keyword>
<keyword id="KW-0479">Metal-binding</keyword>
<keyword id="KW-0503">Monooxygenase</keyword>
<keyword id="KW-0560">Oxidoreductase</keyword>
<keyword id="KW-1185">Reference proteome</keyword>
<name>HDOX_HALH5</name>